<name>PLSX_SYNWW</name>
<accession>Q0AYW2</accession>
<sequence>MRIAVDAMGGDYAPLEIVAGAVKWVAEEEERQIFLVGQEELLKQELKSYSYDPSRLIVVNASEVITMEESPATAIRRKKDASIVVASRMVKEKKADAIISCGSTGAQMAAAIFILGRMEGIERPPIVASIPNMTGAYTLLIDVGANVDCKPRQLLQFALLGKTYASIIYGVEQPRVALLNNGEEESKGNTVTMETYALLRQQSGINFTGNVEGRDIFTGKSDVIVCDGFTGNVLLKTMEGMALFIAQGILGAGGPMPAFFQRLDYTQTGGAPLLGINGLSIVCHGSSKREAVYNGLRIAEDCYNKNIIEMQQLELSKISG</sequence>
<gene>
    <name evidence="1" type="primary">plsX</name>
    <name type="ordered locus">Swol_0771</name>
</gene>
<reference key="1">
    <citation type="journal article" date="2010" name="Environ. Microbiol.">
        <title>The genome of Syntrophomonas wolfei: new insights into syntrophic metabolism and biohydrogen production.</title>
        <authorList>
            <person name="Sieber J.R."/>
            <person name="Sims D.R."/>
            <person name="Han C."/>
            <person name="Kim E."/>
            <person name="Lykidis A."/>
            <person name="Lapidus A.L."/>
            <person name="McDonnald E."/>
            <person name="Rohlin L."/>
            <person name="Culley D.E."/>
            <person name="Gunsalus R."/>
            <person name="McInerney M.J."/>
        </authorList>
    </citation>
    <scope>NUCLEOTIDE SEQUENCE [LARGE SCALE GENOMIC DNA]</scope>
    <source>
        <strain>DSM 2245B / Goettingen</strain>
    </source>
</reference>
<feature type="chain" id="PRO_1000057180" description="Phosphate acyltransferase">
    <location>
        <begin position="1"/>
        <end position="320"/>
    </location>
</feature>
<proteinExistence type="inferred from homology"/>
<organism>
    <name type="scientific">Syntrophomonas wolfei subsp. wolfei (strain DSM 2245B / Goettingen)</name>
    <dbReference type="NCBI Taxonomy" id="335541"/>
    <lineage>
        <taxon>Bacteria</taxon>
        <taxon>Bacillati</taxon>
        <taxon>Bacillota</taxon>
        <taxon>Clostridia</taxon>
        <taxon>Eubacteriales</taxon>
        <taxon>Syntrophomonadaceae</taxon>
        <taxon>Syntrophomonas</taxon>
    </lineage>
</organism>
<dbReference type="EC" id="2.3.1.274" evidence="1"/>
<dbReference type="EMBL" id="CP000448">
    <property type="protein sequence ID" value="ABI68092.1"/>
    <property type="molecule type" value="Genomic_DNA"/>
</dbReference>
<dbReference type="RefSeq" id="WP_011640197.1">
    <property type="nucleotide sequence ID" value="NC_008346.1"/>
</dbReference>
<dbReference type="SMR" id="Q0AYW2"/>
<dbReference type="STRING" id="335541.Swol_0771"/>
<dbReference type="KEGG" id="swo:Swol_0771"/>
<dbReference type="eggNOG" id="COG0416">
    <property type="taxonomic scope" value="Bacteria"/>
</dbReference>
<dbReference type="HOGENOM" id="CLU_039379_1_1_9"/>
<dbReference type="OrthoDB" id="9806408at2"/>
<dbReference type="UniPathway" id="UPA00085"/>
<dbReference type="Proteomes" id="UP000001968">
    <property type="component" value="Chromosome"/>
</dbReference>
<dbReference type="GO" id="GO:0005737">
    <property type="term" value="C:cytoplasm"/>
    <property type="evidence" value="ECO:0007669"/>
    <property type="project" value="UniProtKB-SubCell"/>
</dbReference>
<dbReference type="GO" id="GO:0043811">
    <property type="term" value="F:phosphate:acyl-[acyl carrier protein] acyltransferase activity"/>
    <property type="evidence" value="ECO:0007669"/>
    <property type="project" value="UniProtKB-UniRule"/>
</dbReference>
<dbReference type="GO" id="GO:0006633">
    <property type="term" value="P:fatty acid biosynthetic process"/>
    <property type="evidence" value="ECO:0007669"/>
    <property type="project" value="UniProtKB-UniRule"/>
</dbReference>
<dbReference type="GO" id="GO:0008654">
    <property type="term" value="P:phospholipid biosynthetic process"/>
    <property type="evidence" value="ECO:0007669"/>
    <property type="project" value="UniProtKB-KW"/>
</dbReference>
<dbReference type="Gene3D" id="3.40.718.10">
    <property type="entry name" value="Isopropylmalate Dehydrogenase"/>
    <property type="match status" value="1"/>
</dbReference>
<dbReference type="HAMAP" id="MF_00019">
    <property type="entry name" value="PlsX"/>
    <property type="match status" value="1"/>
</dbReference>
<dbReference type="InterPro" id="IPR003664">
    <property type="entry name" value="FA_synthesis"/>
</dbReference>
<dbReference type="InterPro" id="IPR012281">
    <property type="entry name" value="Phospholipid_synth_PlsX-like"/>
</dbReference>
<dbReference type="NCBIfam" id="TIGR00182">
    <property type="entry name" value="plsX"/>
    <property type="match status" value="1"/>
</dbReference>
<dbReference type="PANTHER" id="PTHR30100">
    <property type="entry name" value="FATTY ACID/PHOSPHOLIPID SYNTHESIS PROTEIN PLSX"/>
    <property type="match status" value="1"/>
</dbReference>
<dbReference type="PANTHER" id="PTHR30100:SF1">
    <property type="entry name" value="PHOSPHATE ACYLTRANSFERASE"/>
    <property type="match status" value="1"/>
</dbReference>
<dbReference type="Pfam" id="PF02504">
    <property type="entry name" value="FA_synthesis"/>
    <property type="match status" value="1"/>
</dbReference>
<dbReference type="PIRSF" id="PIRSF002465">
    <property type="entry name" value="Phsphlp_syn_PlsX"/>
    <property type="match status" value="1"/>
</dbReference>
<dbReference type="SUPFAM" id="SSF53659">
    <property type="entry name" value="Isocitrate/Isopropylmalate dehydrogenase-like"/>
    <property type="match status" value="1"/>
</dbReference>
<protein>
    <recommendedName>
        <fullName evidence="1">Phosphate acyltransferase</fullName>
        <ecNumber evidence="1">2.3.1.274</ecNumber>
    </recommendedName>
    <alternativeName>
        <fullName evidence="1">Acyl-ACP phosphotransacylase</fullName>
    </alternativeName>
    <alternativeName>
        <fullName evidence="1">Acyl-[acyl-carrier-protein]--phosphate acyltransferase</fullName>
    </alternativeName>
    <alternativeName>
        <fullName evidence="1">Phosphate-acyl-ACP acyltransferase</fullName>
    </alternativeName>
</protein>
<comment type="function">
    <text evidence="1">Catalyzes the reversible formation of acyl-phosphate (acyl-PO(4)) from acyl-[acyl-carrier-protein] (acyl-ACP). This enzyme utilizes acyl-ACP as fatty acyl donor, but not acyl-CoA.</text>
</comment>
<comment type="catalytic activity">
    <reaction evidence="1">
        <text>a fatty acyl-[ACP] + phosphate = an acyl phosphate + holo-[ACP]</text>
        <dbReference type="Rhea" id="RHEA:42292"/>
        <dbReference type="Rhea" id="RHEA-COMP:9685"/>
        <dbReference type="Rhea" id="RHEA-COMP:14125"/>
        <dbReference type="ChEBI" id="CHEBI:43474"/>
        <dbReference type="ChEBI" id="CHEBI:59918"/>
        <dbReference type="ChEBI" id="CHEBI:64479"/>
        <dbReference type="ChEBI" id="CHEBI:138651"/>
        <dbReference type="EC" id="2.3.1.274"/>
    </reaction>
</comment>
<comment type="pathway">
    <text evidence="1">Lipid metabolism; phospholipid metabolism.</text>
</comment>
<comment type="subunit">
    <text evidence="1">Homodimer. Probably interacts with PlsY.</text>
</comment>
<comment type="subcellular location">
    <subcellularLocation>
        <location evidence="1">Cytoplasm</location>
    </subcellularLocation>
    <text evidence="1">Associated with the membrane possibly through PlsY.</text>
</comment>
<comment type="similarity">
    <text evidence="1">Belongs to the PlsX family.</text>
</comment>
<keyword id="KW-0963">Cytoplasm</keyword>
<keyword id="KW-0444">Lipid biosynthesis</keyword>
<keyword id="KW-0443">Lipid metabolism</keyword>
<keyword id="KW-0594">Phospholipid biosynthesis</keyword>
<keyword id="KW-1208">Phospholipid metabolism</keyword>
<keyword id="KW-1185">Reference proteome</keyword>
<keyword id="KW-0808">Transferase</keyword>
<evidence type="ECO:0000255" key="1">
    <source>
        <dbReference type="HAMAP-Rule" id="MF_00019"/>
    </source>
</evidence>